<reference key="1">
    <citation type="submission" date="2007-03" db="EMBL/GenBank/DDBJ databases">
        <title>Complete sequence of Prosthecochloris vibrioformis DSM 265.</title>
        <authorList>
            <consortium name="US DOE Joint Genome Institute"/>
            <person name="Copeland A."/>
            <person name="Lucas S."/>
            <person name="Lapidus A."/>
            <person name="Barry K."/>
            <person name="Detter J.C."/>
            <person name="Glavina del Rio T."/>
            <person name="Hammon N."/>
            <person name="Israni S."/>
            <person name="Pitluck S."/>
            <person name="Schmutz J."/>
            <person name="Larimer F."/>
            <person name="Land M."/>
            <person name="Hauser L."/>
            <person name="Mikhailova N."/>
            <person name="Li T."/>
            <person name="Overmann J."/>
            <person name="Schuster S.C."/>
            <person name="Bryant D.A."/>
            <person name="Richardson P."/>
        </authorList>
    </citation>
    <scope>NUCLEOTIDE SEQUENCE [LARGE SCALE GENOMIC DNA]</scope>
    <source>
        <strain>DSM 265 / 1930</strain>
    </source>
</reference>
<sequence length="256" mass="28431">MLIIPAIDIKDGKCVRLTRGDFSQQKIYLDNPLDMAIIWRKQNAKMLHIVDLDAALTGEMVNFDIIANIVAELDIPVQIGGGIRSIDAVKRYLDMGVGRVVIGSAAVTDPELVGELMKHWPASKIVVGIDAENGVPKIKGWTESSGMQDYELALRMKDMGVERIVYTDISRDGMMQGFGYESTKRFAQKAGLKVTASGGVTNSEDLQRLATLRPYGVDSVIIGKAFYECNFPCQELWYNFEKGICLDQNFSTARRK</sequence>
<protein>
    <recommendedName>
        <fullName evidence="1">1-(5-phosphoribosyl)-5-[(5-phosphoribosylamino)methylideneamino] imidazole-4-carboxamide isomerase</fullName>
        <ecNumber evidence="1">5.3.1.16</ecNumber>
    </recommendedName>
    <alternativeName>
        <fullName evidence="1">Phosphoribosylformimino-5-aminoimidazole carboxamide ribotide isomerase</fullName>
    </alternativeName>
</protein>
<proteinExistence type="inferred from homology"/>
<keyword id="KW-0028">Amino-acid biosynthesis</keyword>
<keyword id="KW-0963">Cytoplasm</keyword>
<keyword id="KW-0368">Histidine biosynthesis</keyword>
<keyword id="KW-0413">Isomerase</keyword>
<evidence type="ECO:0000255" key="1">
    <source>
        <dbReference type="HAMAP-Rule" id="MF_01014"/>
    </source>
</evidence>
<comment type="catalytic activity">
    <reaction evidence="1">
        <text>1-(5-phospho-beta-D-ribosyl)-5-[(5-phospho-beta-D-ribosylamino)methylideneamino]imidazole-4-carboxamide = 5-[(5-phospho-1-deoxy-D-ribulos-1-ylimino)methylamino]-1-(5-phospho-beta-D-ribosyl)imidazole-4-carboxamide</text>
        <dbReference type="Rhea" id="RHEA:15469"/>
        <dbReference type="ChEBI" id="CHEBI:58435"/>
        <dbReference type="ChEBI" id="CHEBI:58525"/>
        <dbReference type="EC" id="5.3.1.16"/>
    </reaction>
</comment>
<comment type="pathway">
    <text evidence="1">Amino-acid biosynthesis; L-histidine biosynthesis; L-histidine from 5-phospho-alpha-D-ribose 1-diphosphate: step 4/9.</text>
</comment>
<comment type="subcellular location">
    <subcellularLocation>
        <location evidence="1">Cytoplasm</location>
    </subcellularLocation>
</comment>
<comment type="similarity">
    <text evidence="1">Belongs to the HisA/HisF family.</text>
</comment>
<accession>A4SG77</accession>
<organism>
    <name type="scientific">Chlorobium phaeovibrioides (strain DSM 265 / 1930)</name>
    <name type="common">Prosthecochloris vibrioformis (strain DSM 265)</name>
    <dbReference type="NCBI Taxonomy" id="290318"/>
    <lineage>
        <taxon>Bacteria</taxon>
        <taxon>Pseudomonadati</taxon>
        <taxon>Chlorobiota</taxon>
        <taxon>Chlorobiia</taxon>
        <taxon>Chlorobiales</taxon>
        <taxon>Chlorobiaceae</taxon>
        <taxon>Chlorobium/Pelodictyon group</taxon>
        <taxon>Chlorobium</taxon>
    </lineage>
</organism>
<name>HIS4_CHLPM</name>
<feature type="chain" id="PRO_1000084104" description="1-(5-phosphoribosyl)-5-[(5-phosphoribosylamino)methylideneamino] imidazole-4-carboxamide isomerase">
    <location>
        <begin position="1"/>
        <end position="256"/>
    </location>
</feature>
<feature type="active site" description="Proton acceptor" evidence="1">
    <location>
        <position position="8"/>
    </location>
</feature>
<feature type="active site" description="Proton donor" evidence="1">
    <location>
        <position position="130"/>
    </location>
</feature>
<dbReference type="EC" id="5.3.1.16" evidence="1"/>
<dbReference type="EMBL" id="CP000607">
    <property type="protein sequence ID" value="ABP37486.1"/>
    <property type="molecule type" value="Genomic_DNA"/>
</dbReference>
<dbReference type="SMR" id="A4SG77"/>
<dbReference type="STRING" id="290318.Cvib_1475"/>
<dbReference type="KEGG" id="pvi:Cvib_1475"/>
<dbReference type="eggNOG" id="COG0106">
    <property type="taxonomic scope" value="Bacteria"/>
</dbReference>
<dbReference type="HOGENOM" id="CLU_048577_1_2_10"/>
<dbReference type="OrthoDB" id="9807749at2"/>
<dbReference type="UniPathway" id="UPA00031">
    <property type="reaction ID" value="UER00009"/>
</dbReference>
<dbReference type="GO" id="GO:0005737">
    <property type="term" value="C:cytoplasm"/>
    <property type="evidence" value="ECO:0007669"/>
    <property type="project" value="UniProtKB-SubCell"/>
</dbReference>
<dbReference type="GO" id="GO:0003949">
    <property type="term" value="F:1-(5-phosphoribosyl)-5-[(5-phosphoribosylamino)methylideneamino]imidazole-4-carboxamide isomerase activity"/>
    <property type="evidence" value="ECO:0007669"/>
    <property type="project" value="UniProtKB-UniRule"/>
</dbReference>
<dbReference type="GO" id="GO:0000105">
    <property type="term" value="P:L-histidine biosynthetic process"/>
    <property type="evidence" value="ECO:0007669"/>
    <property type="project" value="UniProtKB-UniRule"/>
</dbReference>
<dbReference type="GO" id="GO:0000162">
    <property type="term" value="P:L-tryptophan biosynthetic process"/>
    <property type="evidence" value="ECO:0007669"/>
    <property type="project" value="TreeGrafter"/>
</dbReference>
<dbReference type="CDD" id="cd04732">
    <property type="entry name" value="HisA"/>
    <property type="match status" value="1"/>
</dbReference>
<dbReference type="FunFam" id="3.20.20.70:FF:000009">
    <property type="entry name" value="1-(5-phosphoribosyl)-5-[(5-phosphoribosylamino)methylideneamino] imidazole-4-carboxamide isomerase"/>
    <property type="match status" value="1"/>
</dbReference>
<dbReference type="Gene3D" id="3.20.20.70">
    <property type="entry name" value="Aldolase class I"/>
    <property type="match status" value="1"/>
</dbReference>
<dbReference type="HAMAP" id="MF_01014">
    <property type="entry name" value="HisA"/>
    <property type="match status" value="1"/>
</dbReference>
<dbReference type="InterPro" id="IPR013785">
    <property type="entry name" value="Aldolase_TIM"/>
</dbReference>
<dbReference type="InterPro" id="IPR006062">
    <property type="entry name" value="His_biosynth"/>
</dbReference>
<dbReference type="InterPro" id="IPR006063">
    <property type="entry name" value="HisA_bact_arch"/>
</dbReference>
<dbReference type="InterPro" id="IPR044524">
    <property type="entry name" value="Isoase_HisA-like"/>
</dbReference>
<dbReference type="InterPro" id="IPR023016">
    <property type="entry name" value="Isoase_HisA-like_bact"/>
</dbReference>
<dbReference type="InterPro" id="IPR011060">
    <property type="entry name" value="RibuloseP-bd_barrel"/>
</dbReference>
<dbReference type="NCBIfam" id="TIGR00007">
    <property type="entry name" value="1-(5-phosphoribosyl)-5-[(5-phosphoribosylamino)methylideneamino]imidazole-4-carboxamide isomerase"/>
    <property type="match status" value="1"/>
</dbReference>
<dbReference type="PANTHER" id="PTHR43090">
    <property type="entry name" value="1-(5-PHOSPHORIBOSYL)-5-[(5-PHOSPHORIBOSYLAMINO)METHYLIDENEAMINO] IMIDAZOLE-4-CARBOXAMIDE ISOMERASE"/>
    <property type="match status" value="1"/>
</dbReference>
<dbReference type="PANTHER" id="PTHR43090:SF2">
    <property type="entry name" value="1-(5-PHOSPHORIBOSYL)-5-[(5-PHOSPHORIBOSYLAMINO)METHYLIDENEAMINO] IMIDAZOLE-4-CARBOXAMIDE ISOMERASE"/>
    <property type="match status" value="1"/>
</dbReference>
<dbReference type="Pfam" id="PF00977">
    <property type="entry name" value="His_biosynth"/>
    <property type="match status" value="1"/>
</dbReference>
<dbReference type="SUPFAM" id="SSF51366">
    <property type="entry name" value="Ribulose-phoshate binding barrel"/>
    <property type="match status" value="1"/>
</dbReference>
<gene>
    <name evidence="1" type="primary">hisA</name>
    <name type="ordered locus">Cvib_1475</name>
</gene>